<evidence type="ECO:0000255" key="1">
    <source>
        <dbReference type="HAMAP-Rule" id="MF_01328"/>
    </source>
</evidence>
<evidence type="ECO:0000256" key="2">
    <source>
        <dbReference type="SAM" id="MobiDB-lite"/>
    </source>
</evidence>
<evidence type="ECO:0000305" key="3"/>
<feature type="chain" id="PRO_0000129272" description="Large ribosomal subunit protein uL4">
    <location>
        <begin position="1"/>
        <end position="201"/>
    </location>
</feature>
<feature type="region of interest" description="Disordered" evidence="2">
    <location>
        <begin position="44"/>
        <end position="71"/>
    </location>
</feature>
<comment type="function">
    <text evidence="1">One of the primary rRNA binding proteins, this protein initially binds near the 5'-end of the 23S rRNA. It is important during the early stages of 50S assembly. It makes multiple contacts with different domains of the 23S rRNA in the assembled 50S subunit and ribosome.</text>
</comment>
<comment type="function">
    <text evidence="1">Forms part of the polypeptide exit tunnel.</text>
</comment>
<comment type="subunit">
    <text evidence="1">Part of the 50S ribosomal subunit.</text>
</comment>
<comment type="similarity">
    <text evidence="1">Belongs to the universal ribosomal protein uL4 family.</text>
</comment>
<organism>
    <name type="scientific">Shigella flexneri</name>
    <dbReference type="NCBI Taxonomy" id="623"/>
    <lineage>
        <taxon>Bacteria</taxon>
        <taxon>Pseudomonadati</taxon>
        <taxon>Pseudomonadota</taxon>
        <taxon>Gammaproteobacteria</taxon>
        <taxon>Enterobacterales</taxon>
        <taxon>Enterobacteriaceae</taxon>
        <taxon>Shigella</taxon>
    </lineage>
</organism>
<dbReference type="EMBL" id="AE005674">
    <property type="protein sequence ID" value="AAN44814.1"/>
    <property type="molecule type" value="Genomic_DNA"/>
</dbReference>
<dbReference type="EMBL" id="AE014073">
    <property type="protein sequence ID" value="AAP19362.1"/>
    <property type="molecule type" value="Genomic_DNA"/>
</dbReference>
<dbReference type="RefSeq" id="NP_709107.1">
    <property type="nucleotide sequence ID" value="NC_004337.2"/>
</dbReference>
<dbReference type="RefSeq" id="WP_000424397.1">
    <property type="nucleotide sequence ID" value="NZ_WPGW01000088.1"/>
</dbReference>
<dbReference type="SMR" id="Q83PY4"/>
<dbReference type="STRING" id="198214.SF3351"/>
<dbReference type="PaxDb" id="198214-SF3351"/>
<dbReference type="GeneID" id="1027011"/>
<dbReference type="KEGG" id="sfl:SF3351"/>
<dbReference type="KEGG" id="sfx:S4411"/>
<dbReference type="PATRIC" id="fig|198214.7.peg.3960"/>
<dbReference type="HOGENOM" id="CLU_041575_5_2_6"/>
<dbReference type="Proteomes" id="UP000001006">
    <property type="component" value="Chromosome"/>
</dbReference>
<dbReference type="Proteomes" id="UP000002673">
    <property type="component" value="Chromosome"/>
</dbReference>
<dbReference type="GO" id="GO:1990904">
    <property type="term" value="C:ribonucleoprotein complex"/>
    <property type="evidence" value="ECO:0007669"/>
    <property type="project" value="UniProtKB-KW"/>
</dbReference>
<dbReference type="GO" id="GO:0005840">
    <property type="term" value="C:ribosome"/>
    <property type="evidence" value="ECO:0007669"/>
    <property type="project" value="UniProtKB-KW"/>
</dbReference>
<dbReference type="GO" id="GO:0019843">
    <property type="term" value="F:rRNA binding"/>
    <property type="evidence" value="ECO:0007669"/>
    <property type="project" value="UniProtKB-UniRule"/>
</dbReference>
<dbReference type="GO" id="GO:0003735">
    <property type="term" value="F:structural constituent of ribosome"/>
    <property type="evidence" value="ECO:0007669"/>
    <property type="project" value="InterPro"/>
</dbReference>
<dbReference type="GO" id="GO:0006412">
    <property type="term" value="P:translation"/>
    <property type="evidence" value="ECO:0007669"/>
    <property type="project" value="UniProtKB-UniRule"/>
</dbReference>
<dbReference type="FunFam" id="3.40.1370.10:FF:000001">
    <property type="entry name" value="50S ribosomal protein L4"/>
    <property type="match status" value="1"/>
</dbReference>
<dbReference type="Gene3D" id="3.40.1370.10">
    <property type="match status" value="1"/>
</dbReference>
<dbReference type="HAMAP" id="MF_01328_B">
    <property type="entry name" value="Ribosomal_uL4_B"/>
    <property type="match status" value="1"/>
</dbReference>
<dbReference type="InterPro" id="IPR002136">
    <property type="entry name" value="Ribosomal_uL4"/>
</dbReference>
<dbReference type="InterPro" id="IPR013005">
    <property type="entry name" value="Ribosomal_uL4-like"/>
</dbReference>
<dbReference type="InterPro" id="IPR023574">
    <property type="entry name" value="Ribosomal_uL4_dom_sf"/>
</dbReference>
<dbReference type="NCBIfam" id="TIGR03953">
    <property type="entry name" value="rplD_bact"/>
    <property type="match status" value="1"/>
</dbReference>
<dbReference type="PANTHER" id="PTHR10746">
    <property type="entry name" value="50S RIBOSOMAL PROTEIN L4"/>
    <property type="match status" value="1"/>
</dbReference>
<dbReference type="PANTHER" id="PTHR10746:SF6">
    <property type="entry name" value="LARGE RIBOSOMAL SUBUNIT PROTEIN UL4M"/>
    <property type="match status" value="1"/>
</dbReference>
<dbReference type="Pfam" id="PF00573">
    <property type="entry name" value="Ribosomal_L4"/>
    <property type="match status" value="1"/>
</dbReference>
<dbReference type="SUPFAM" id="SSF52166">
    <property type="entry name" value="Ribosomal protein L4"/>
    <property type="match status" value="1"/>
</dbReference>
<protein>
    <recommendedName>
        <fullName evidence="1">Large ribosomal subunit protein uL4</fullName>
    </recommendedName>
    <alternativeName>
        <fullName evidence="3">50S ribosomal protein L4</fullName>
    </alternativeName>
</protein>
<gene>
    <name evidence="1" type="primary">rplD</name>
    <name type="ordered locus">SF3351</name>
    <name type="ordered locus">S4411</name>
</gene>
<keyword id="KW-1185">Reference proteome</keyword>
<keyword id="KW-0687">Ribonucleoprotein</keyword>
<keyword id="KW-0689">Ribosomal protein</keyword>
<keyword id="KW-0694">RNA-binding</keyword>
<keyword id="KW-0699">rRNA-binding</keyword>
<accession>Q83PY4</accession>
<reference key="1">
    <citation type="journal article" date="2002" name="Nucleic Acids Res.">
        <title>Genome sequence of Shigella flexneri 2a: insights into pathogenicity through comparison with genomes of Escherichia coli K12 and O157.</title>
        <authorList>
            <person name="Jin Q."/>
            <person name="Yuan Z."/>
            <person name="Xu J."/>
            <person name="Wang Y."/>
            <person name="Shen Y."/>
            <person name="Lu W."/>
            <person name="Wang J."/>
            <person name="Liu H."/>
            <person name="Yang J."/>
            <person name="Yang F."/>
            <person name="Zhang X."/>
            <person name="Zhang J."/>
            <person name="Yang G."/>
            <person name="Wu H."/>
            <person name="Qu D."/>
            <person name="Dong J."/>
            <person name="Sun L."/>
            <person name="Xue Y."/>
            <person name="Zhao A."/>
            <person name="Gao Y."/>
            <person name="Zhu J."/>
            <person name="Kan B."/>
            <person name="Ding K."/>
            <person name="Chen S."/>
            <person name="Cheng H."/>
            <person name="Yao Z."/>
            <person name="He B."/>
            <person name="Chen R."/>
            <person name="Ma D."/>
            <person name="Qiang B."/>
            <person name="Wen Y."/>
            <person name="Hou Y."/>
            <person name="Yu J."/>
        </authorList>
    </citation>
    <scope>NUCLEOTIDE SEQUENCE [LARGE SCALE GENOMIC DNA]</scope>
    <source>
        <strain>301 / Serotype 2a</strain>
    </source>
</reference>
<reference key="2">
    <citation type="journal article" date="2003" name="Infect. Immun.">
        <title>Complete genome sequence and comparative genomics of Shigella flexneri serotype 2a strain 2457T.</title>
        <authorList>
            <person name="Wei J."/>
            <person name="Goldberg M.B."/>
            <person name="Burland V."/>
            <person name="Venkatesan M.M."/>
            <person name="Deng W."/>
            <person name="Fournier G."/>
            <person name="Mayhew G.F."/>
            <person name="Plunkett G. III"/>
            <person name="Rose D.J."/>
            <person name="Darling A."/>
            <person name="Mau B."/>
            <person name="Perna N.T."/>
            <person name="Payne S.M."/>
            <person name="Runyen-Janecky L.J."/>
            <person name="Zhou S."/>
            <person name="Schwartz D.C."/>
            <person name="Blattner F.R."/>
        </authorList>
    </citation>
    <scope>NUCLEOTIDE SEQUENCE [LARGE SCALE GENOMIC DNA]</scope>
    <source>
        <strain>ATCC 700930 / 2457T / Serotype 2a</strain>
    </source>
</reference>
<sequence>MELVLKDAQSALTVSETTFGRDFNEALVHQVVVAYAAGARQGTRAQKTRAEVTGSGKKPWRQKGTGRARSGSIKSPIWRSGGVTFAARPQDHSQKVNKKMYRGALKSILSELVRQDRLIVVEKFSVEAPKTKLLAQKLKDMALEDVLIITGELDENLFLAARNLQKVDVRDATGIDPVSLIAFDKVVMTADAVKQVEEMLA</sequence>
<proteinExistence type="inferred from homology"/>
<name>RL4_SHIFL</name>